<protein>
    <recommendedName>
        <fullName>Putative glutamine--fructose-6-phosphate aminotransferase [isomerizing]</fullName>
        <shortName>GFAT</shortName>
        <ecNumber>2.6.1.16</ecNumber>
    </recommendedName>
    <alternativeName>
        <fullName>D-fructose-6-phosphate amidotransferase</fullName>
    </alternativeName>
    <alternativeName>
        <fullName>Hexosephosphate aminotransferase</fullName>
    </alternativeName>
</protein>
<dbReference type="EC" id="2.6.1.16"/>
<dbReference type="EMBL" id="FN393082">
    <property type="protein sequence ID" value="CAY81903.1"/>
    <property type="molecule type" value="Genomic_DNA"/>
</dbReference>
<dbReference type="SMR" id="C8ZET7"/>
<dbReference type="HOGENOM" id="CLU_012520_6_2_1"/>
<dbReference type="OrthoDB" id="13837at4893"/>
<dbReference type="UniPathway" id="UPA00113">
    <property type="reaction ID" value="UER00528"/>
</dbReference>
<dbReference type="Proteomes" id="UP000000286">
    <property type="component" value="Chromosome XIII, Scaffold EC1118_1M3"/>
</dbReference>
<dbReference type="GO" id="GO:0004360">
    <property type="term" value="F:glutamine-fructose-6-phosphate transaminase (isomerizing) activity"/>
    <property type="evidence" value="ECO:0007669"/>
    <property type="project" value="UniProtKB-EC"/>
</dbReference>
<dbReference type="GO" id="GO:0006002">
    <property type="term" value="P:fructose 6-phosphate metabolic process"/>
    <property type="evidence" value="ECO:0007669"/>
    <property type="project" value="TreeGrafter"/>
</dbReference>
<dbReference type="GO" id="GO:0006487">
    <property type="term" value="P:protein N-linked glycosylation"/>
    <property type="evidence" value="ECO:0007669"/>
    <property type="project" value="TreeGrafter"/>
</dbReference>
<dbReference type="GO" id="GO:0006048">
    <property type="term" value="P:UDP-N-acetylglucosamine biosynthetic process"/>
    <property type="evidence" value="ECO:0007669"/>
    <property type="project" value="UniProtKB-UniPathway"/>
</dbReference>
<dbReference type="CDD" id="cd00714">
    <property type="entry name" value="GFAT"/>
    <property type="match status" value="1"/>
</dbReference>
<dbReference type="Gene3D" id="3.60.20.10">
    <property type="entry name" value="Glutamine Phosphoribosylpyrophosphate, subunit 1, domain 1"/>
    <property type="match status" value="1"/>
</dbReference>
<dbReference type="InterPro" id="IPR017932">
    <property type="entry name" value="GATase_2_dom"/>
</dbReference>
<dbReference type="InterPro" id="IPR047084">
    <property type="entry name" value="GFAT_N"/>
</dbReference>
<dbReference type="InterPro" id="IPR029055">
    <property type="entry name" value="Ntn_hydrolases_N"/>
</dbReference>
<dbReference type="PANTHER" id="PTHR10937">
    <property type="entry name" value="GLUCOSAMINE--FRUCTOSE-6-PHOSPHATE AMINOTRANSFERASE, ISOMERIZING"/>
    <property type="match status" value="1"/>
</dbReference>
<dbReference type="PANTHER" id="PTHR10937:SF0">
    <property type="entry name" value="GLUTAMINE--FRUCTOSE-6-PHOSPHATE TRANSAMINASE (ISOMERIZING)"/>
    <property type="match status" value="1"/>
</dbReference>
<dbReference type="Pfam" id="PF13522">
    <property type="entry name" value="GATase_6"/>
    <property type="match status" value="1"/>
</dbReference>
<dbReference type="SUPFAM" id="SSF56235">
    <property type="entry name" value="N-terminal nucleophile aminohydrolases (Ntn hydrolases)"/>
    <property type="match status" value="1"/>
</dbReference>
<dbReference type="PROSITE" id="PS51278">
    <property type="entry name" value="GATASE_TYPE_2"/>
    <property type="match status" value="1"/>
</dbReference>
<name>YM084_YEAS8</name>
<feature type="chain" id="PRO_0000393383" description="Putative glutamine--fructose-6-phosphate aminotransferase [isomerizing]">
    <location>
        <begin position="1"/>
        <end position="305"/>
    </location>
</feature>
<feature type="domain" description="Glutamine amidotransferase type-2" evidence="2">
    <location>
        <begin position="2"/>
        <end position="305"/>
    </location>
</feature>
<feature type="active site" description="Nucleophile; for GATase activity" evidence="2">
    <location>
        <position position="2"/>
    </location>
</feature>
<sequence length="305" mass="34232">MCGIFGYCNFLIEKTRGEIIDTLIEGLQALEYKEYDSSGISIQGDELKSLNIYKQTGKISSLKEEIDLYNLNKNLPFISHCGITHTRRATHGGLRRANCHPHNSDPSNEFVVVHNGVITNFANLKALLVAKGYVFKSDTDTECIPKLYKHIYDTSIELGYNLDFHVLTNLVLKELEGSYGLLCTSSHFPDEVVAARKGSPLVIGVKGKTDMDVNFVEVEYLDQEEDYLKLNTQTKSSGNVLAAAPVKYNTCLRKSPPPSFTIPEKLYNFYIQSWLIHRNASRERLAATHGILFVIRLCITSAVCE</sequence>
<evidence type="ECO:0000250" key="1"/>
<evidence type="ECO:0000255" key="2">
    <source>
        <dbReference type="PROSITE-ProRule" id="PRU00609"/>
    </source>
</evidence>
<evidence type="ECO:0000305" key="3"/>
<organism>
    <name type="scientific">Saccharomyces cerevisiae (strain Lalvin EC1118 / Prise de mousse)</name>
    <name type="common">Baker's yeast</name>
    <dbReference type="NCBI Taxonomy" id="643680"/>
    <lineage>
        <taxon>Eukaryota</taxon>
        <taxon>Fungi</taxon>
        <taxon>Dikarya</taxon>
        <taxon>Ascomycota</taxon>
        <taxon>Saccharomycotina</taxon>
        <taxon>Saccharomycetes</taxon>
        <taxon>Saccharomycetales</taxon>
        <taxon>Saccharomycetaceae</taxon>
        <taxon>Saccharomyces</taxon>
    </lineage>
</organism>
<gene>
    <name type="ORF">EC1118_1M3_2520g</name>
</gene>
<accession>C8ZET7</accession>
<proteinExistence type="inferred from homology"/>
<keyword id="KW-0032">Aminotransferase</keyword>
<keyword id="KW-0315">Glutamine amidotransferase</keyword>
<keyword id="KW-0808">Transferase</keyword>
<comment type="function">
    <text evidence="1">Involved in amino sugar synthesis (formation of chitin, supplies the amino sugars of asparagine-linked oligosaccharides of glycoproteins).</text>
</comment>
<comment type="catalytic activity">
    <reaction>
        <text>D-fructose 6-phosphate + L-glutamine = D-glucosamine 6-phosphate + L-glutamate</text>
        <dbReference type="Rhea" id="RHEA:13237"/>
        <dbReference type="ChEBI" id="CHEBI:29985"/>
        <dbReference type="ChEBI" id="CHEBI:58359"/>
        <dbReference type="ChEBI" id="CHEBI:58725"/>
        <dbReference type="ChEBI" id="CHEBI:61527"/>
        <dbReference type="EC" id="2.6.1.16"/>
    </reaction>
</comment>
<comment type="pathway">
    <text>Nucleotide-sugar biosynthesis; UDP-N-acetyl-alpha-D-glucosamine biosynthesis; alpha-D-glucosamine 6-phosphate from D-fructose 6-phosphate: step 1/1.</text>
</comment>
<comment type="caution">
    <text evidence="3">This is a truncated version of a putative glutamine--fructose-6-phosphate aminotransferase. Strain Lalvin EC1118 has a frameshift in position 258, which disrupts the gene coding for this protein and produces two ORFs. A contiguous sequence for this protein can be found in strain YJM789 (AC A6ZME2).</text>
</comment>
<reference key="1">
    <citation type="journal article" date="2009" name="Proc. Natl. Acad. Sci. U.S.A.">
        <title>Eukaryote-to-eukaryote gene transfer events revealed by the genome sequence of the wine yeast Saccharomyces cerevisiae EC1118.</title>
        <authorList>
            <person name="Novo M."/>
            <person name="Bigey F."/>
            <person name="Beyne E."/>
            <person name="Galeote V."/>
            <person name="Gavory F."/>
            <person name="Mallet S."/>
            <person name="Cambon B."/>
            <person name="Legras J.-L."/>
            <person name="Wincker P."/>
            <person name="Casaregola S."/>
            <person name="Dequin S."/>
        </authorList>
    </citation>
    <scope>NUCLEOTIDE SEQUENCE [LARGE SCALE GENOMIC DNA]</scope>
    <source>
        <strain>Lalvin EC1118 / Prise de mousse</strain>
    </source>
</reference>